<dbReference type="EMBL" id="AB186127">
    <property type="protein sequence ID" value="BAD86496.1"/>
    <property type="molecule type" value="mRNA"/>
</dbReference>
<dbReference type="EMBL" id="AP006068">
    <property type="protein sequence ID" value="BAD17765.1"/>
    <property type="status" value="ALT_SEQ"/>
    <property type="molecule type" value="Genomic_DNA"/>
</dbReference>
<dbReference type="EMBL" id="AP006069">
    <property type="protein sequence ID" value="BAD17773.1"/>
    <property type="status" value="ALT_SEQ"/>
    <property type="molecule type" value="Genomic_DNA"/>
</dbReference>
<dbReference type="EMBL" id="AP008208">
    <property type="protein sequence ID" value="BAF09095.1"/>
    <property type="molecule type" value="Genomic_DNA"/>
</dbReference>
<dbReference type="EMBL" id="AP014958">
    <property type="protein sequence ID" value="BAS79325.1"/>
    <property type="molecule type" value="Genomic_DNA"/>
</dbReference>
<dbReference type="RefSeq" id="XP_015624758.1">
    <property type="nucleotide sequence ID" value="XM_015769272.1"/>
</dbReference>
<dbReference type="FunCoup" id="Q5KS50">
    <property type="interactions" value="1179"/>
</dbReference>
<dbReference type="STRING" id="39947.Q5KS50"/>
<dbReference type="PaxDb" id="39947-Q5KS50"/>
<dbReference type="EnsemblPlants" id="Os02t0568200-01">
    <property type="protein sequence ID" value="Os02t0568200-01"/>
    <property type="gene ID" value="Os02g0568200"/>
</dbReference>
<dbReference type="Gramene" id="Os02t0568200-01">
    <property type="protein sequence ID" value="Os02t0568200-01"/>
    <property type="gene ID" value="Os02g0568200"/>
</dbReference>
<dbReference type="KEGG" id="dosa:Os02g0568200"/>
<dbReference type="eggNOG" id="ENOG502QR3H">
    <property type="taxonomic scope" value="Eukaryota"/>
</dbReference>
<dbReference type="HOGENOM" id="CLU_005994_6_2_1"/>
<dbReference type="InParanoid" id="Q5KS50"/>
<dbReference type="OMA" id="EQRRWRN"/>
<dbReference type="OrthoDB" id="624345at2759"/>
<dbReference type="UniPathway" id="UPA00143"/>
<dbReference type="Proteomes" id="UP000000763">
    <property type="component" value="Chromosome 2"/>
</dbReference>
<dbReference type="Proteomes" id="UP000059680">
    <property type="component" value="Chromosome 2"/>
</dbReference>
<dbReference type="GO" id="GO:0016567">
    <property type="term" value="P:protein ubiquitination"/>
    <property type="evidence" value="ECO:0007669"/>
    <property type="project" value="UniProtKB-UniPathway"/>
</dbReference>
<dbReference type="CDD" id="cd18312">
    <property type="entry name" value="BTB_POZ_NPY3-like"/>
    <property type="match status" value="1"/>
</dbReference>
<dbReference type="InterPro" id="IPR043454">
    <property type="entry name" value="NPH3/RPT2-like"/>
</dbReference>
<dbReference type="InterPro" id="IPR027356">
    <property type="entry name" value="NPH3_dom"/>
</dbReference>
<dbReference type="InterPro" id="IPR011333">
    <property type="entry name" value="SKP1/BTB/POZ_sf"/>
</dbReference>
<dbReference type="PANTHER" id="PTHR32370">
    <property type="entry name" value="OS12G0117600 PROTEIN"/>
    <property type="match status" value="1"/>
</dbReference>
<dbReference type="Pfam" id="PF03000">
    <property type="entry name" value="NPH3"/>
    <property type="match status" value="1"/>
</dbReference>
<dbReference type="SUPFAM" id="SSF54695">
    <property type="entry name" value="POZ domain"/>
    <property type="match status" value="1"/>
</dbReference>
<dbReference type="PROSITE" id="PS51649">
    <property type="entry name" value="NPH3"/>
    <property type="match status" value="1"/>
</dbReference>
<organism>
    <name type="scientific">Oryza sativa subsp. japonica</name>
    <name type="common">Rice</name>
    <dbReference type="NCBI Taxonomy" id="39947"/>
    <lineage>
        <taxon>Eukaryota</taxon>
        <taxon>Viridiplantae</taxon>
        <taxon>Streptophyta</taxon>
        <taxon>Embryophyta</taxon>
        <taxon>Tracheophyta</taxon>
        <taxon>Spermatophyta</taxon>
        <taxon>Magnoliopsida</taxon>
        <taxon>Liliopsida</taxon>
        <taxon>Poales</taxon>
        <taxon>Poaceae</taxon>
        <taxon>BOP clade</taxon>
        <taxon>Oryzoideae</taxon>
        <taxon>Oryzeae</taxon>
        <taxon>Oryzinae</taxon>
        <taxon>Oryza</taxon>
        <taxon>Oryza sativa</taxon>
    </lineage>
</organism>
<keyword id="KW-0175">Coiled coil</keyword>
<keyword id="KW-1185">Reference proteome</keyword>
<keyword id="KW-0833">Ubl conjugation pathway</keyword>
<protein>
    <recommendedName>
        <fullName>Coleoptile phototropism protein 1</fullName>
    </recommendedName>
    <alternativeName>
        <fullName>BTB/POZ domain-containing protein CPT1</fullName>
    </alternativeName>
    <alternativeName>
        <fullName>Non-phototropic hypocotyl 3-like protein</fullName>
        <shortName>NPH3-like protein</shortName>
    </alternativeName>
</protein>
<accession>Q5KS50</accession>
<accession>Q0E093</accession>
<accession>Q6YTG4</accession>
<reference key="1">
    <citation type="journal article" date="2005" name="Plant Cell">
        <title>The rice coleoptile phototropism1 gene encoding an ortholog of Arabidopsis NPH3 is required for phototropism of coleoptiles and lateral translocation of auxin.</title>
        <authorList>
            <person name="Haga K."/>
            <person name="Takano M."/>
            <person name="Neumann R."/>
            <person name="Iino M."/>
        </authorList>
    </citation>
    <scope>NUCLEOTIDE SEQUENCE [MRNA]</scope>
    <scope>FUNCTION</scope>
    <source>
        <strain>cv. Nihonmasari</strain>
    </source>
</reference>
<reference key="2">
    <citation type="journal article" date="2005" name="Nature">
        <title>The map-based sequence of the rice genome.</title>
        <authorList>
            <consortium name="International rice genome sequencing project (IRGSP)"/>
        </authorList>
    </citation>
    <scope>NUCLEOTIDE SEQUENCE [LARGE SCALE GENOMIC DNA]</scope>
    <source>
        <strain>cv. Nipponbare</strain>
    </source>
</reference>
<reference key="3">
    <citation type="journal article" date="2008" name="Nucleic Acids Res.">
        <title>The rice annotation project database (RAP-DB): 2008 update.</title>
        <authorList>
            <consortium name="The rice annotation project (RAP)"/>
        </authorList>
    </citation>
    <scope>GENOME REANNOTATION</scope>
    <source>
        <strain>cv. Nipponbare</strain>
    </source>
</reference>
<reference key="4">
    <citation type="journal article" date="2013" name="Rice">
        <title>Improvement of the Oryza sativa Nipponbare reference genome using next generation sequence and optical map data.</title>
        <authorList>
            <person name="Kawahara Y."/>
            <person name="de la Bastide M."/>
            <person name="Hamilton J.P."/>
            <person name="Kanamori H."/>
            <person name="McCombie W.R."/>
            <person name="Ouyang S."/>
            <person name="Schwartz D.C."/>
            <person name="Tanaka T."/>
            <person name="Wu J."/>
            <person name="Zhou S."/>
            <person name="Childs K.L."/>
            <person name="Davidson R.M."/>
            <person name="Lin H."/>
            <person name="Quesada-Ocampo L."/>
            <person name="Vaillancourt B."/>
            <person name="Sakai H."/>
            <person name="Lee S.S."/>
            <person name="Kim J."/>
            <person name="Numa H."/>
            <person name="Itoh T."/>
            <person name="Buell C.R."/>
            <person name="Matsumoto T."/>
        </authorList>
    </citation>
    <scope>GENOME REANNOTATION</scope>
    <source>
        <strain>cv. Nipponbare</strain>
    </source>
</reference>
<name>NPH3_ORYSJ</name>
<proteinExistence type="evidence at transcript level"/>
<gene>
    <name type="primary">CPT1</name>
    <name type="ordered locus">Os02g0568200</name>
    <name type="ordered locus">LOC_Os02g35970</name>
    <name type="ORF">P0020D05.32</name>
    <name type="ORF">P0025F02.3</name>
</gene>
<feature type="chain" id="PRO_0000057940" description="Coleoptile phototropism protein 1">
    <location>
        <begin position="1"/>
        <end position="762"/>
    </location>
</feature>
<feature type="domain" description="BTB">
    <location>
        <begin position="51"/>
        <end position="128"/>
    </location>
</feature>
<feature type="domain" description="NPH3" evidence="3">
    <location>
        <begin position="268"/>
        <end position="607"/>
    </location>
</feature>
<feature type="region of interest" description="Disordered" evidence="4">
    <location>
        <begin position="1"/>
        <end position="29"/>
    </location>
</feature>
<feature type="region of interest" description="Disordered" evidence="4">
    <location>
        <begin position="227"/>
        <end position="264"/>
    </location>
</feature>
<feature type="region of interest" description="Disordered" evidence="4">
    <location>
        <begin position="460"/>
        <end position="495"/>
    </location>
</feature>
<feature type="region of interest" description="Disordered" evidence="4">
    <location>
        <begin position="687"/>
        <end position="718"/>
    </location>
</feature>
<feature type="region of interest" description="Disordered" evidence="4">
    <location>
        <begin position="731"/>
        <end position="762"/>
    </location>
</feature>
<feature type="coiled-coil region" evidence="2">
    <location>
        <begin position="654"/>
        <end position="691"/>
    </location>
</feature>
<feature type="compositionally biased region" description="Basic and acidic residues" evidence="4">
    <location>
        <begin position="1"/>
        <end position="12"/>
    </location>
</feature>
<feature type="compositionally biased region" description="Gly residues" evidence="4">
    <location>
        <begin position="227"/>
        <end position="238"/>
    </location>
</feature>
<feature type="compositionally biased region" description="Low complexity" evidence="4">
    <location>
        <begin position="696"/>
        <end position="709"/>
    </location>
</feature>
<feature type="compositionally biased region" description="Gly residues" evidence="4">
    <location>
        <begin position="736"/>
        <end position="747"/>
    </location>
</feature>
<feature type="compositionally biased region" description="Basic residues" evidence="4">
    <location>
        <begin position="752"/>
        <end position="762"/>
    </location>
</feature>
<evidence type="ECO:0000250" key="1"/>
<evidence type="ECO:0000255" key="2"/>
<evidence type="ECO:0000255" key="3">
    <source>
        <dbReference type="PROSITE-ProRule" id="PRU00982"/>
    </source>
</evidence>
<evidence type="ECO:0000256" key="4">
    <source>
        <dbReference type="SAM" id="MobiDB-lite"/>
    </source>
</evidence>
<evidence type="ECO:0000269" key="5">
    <source>
    </source>
</evidence>
<evidence type="ECO:0000305" key="6"/>
<comment type="function">
    <text evidence="1 5">May act as a substrate-specific adapter of an E3 ubiquitin-protein ligase complex (CUL3-RBX1-BTB) which mediates the ubiquitination and subsequent proteasomal degradation of target proteins (By similarity). Plays a role as signal transduction component in coleoptile phototropism and lateral translocation of auxin.</text>
</comment>
<comment type="pathway">
    <text>Protein modification; protein ubiquitination.</text>
</comment>
<comment type="domain">
    <text>The BTB/POZ domain mediates the interaction with some component of ubiquitin ligase complexes.</text>
</comment>
<comment type="similarity">
    <text evidence="3">Belongs to the NPH3 family.</text>
</comment>
<comment type="sequence caution" evidence="6">
    <conflict type="erroneous gene model prediction">
        <sequence resource="EMBL-CDS" id="BAD17765"/>
    </conflict>
</comment>
<comment type="sequence caution" evidence="6">
    <conflict type="erroneous gene model prediction">
        <sequence resource="EMBL-CDS" id="BAD17773"/>
    </conflict>
</comment>
<sequence>MWESESESHGGERGLVPVGGGGGSGRHEAALKNDGFVRRDRSWYVNSDIPSDLLVKVGDVNFYLHKYPMISRSGRMSRAVYESSAADEAEADAAAAVAVVEMGDLPGGAGSFELAARFSYGMAVDLTAANISGLRCAAEYLEMTEEMEEGNLIFKTEAFLSYVVLSSWRDSIAVLKSCEALSPWAENLQIVRRCSESIAWKACANPRGVRWAYTGAGAGSGGARGGPAAIRGGGGSGGTASPRWNVGGGGGGESKESSPSRQAVPPADWWFEDVSVLRIDHFVRVVTAIKVKGMRFDLIGAAITHYASKWLPGLTKDAPLGATHDEPWAQASAAGVGGGGLHMMIISGAGGGKDDVLAACSAPSREQRMVVESIISITPPQRDSVSCGFLLRLLRLAIMLRAAPALVTELEKRVGMQLEQAALADLLIPSYGGRAADTAYDVDLVQRLVEHFLVQEQTEMAVASSPGRGDPPPPPQPEYYSGRMPPSSAAAASASASTGGLNAKARVARLLDSYLSEVSRDRNLSLTKFQVLAESLPESARACDDGLYRAVDSYLKAHPTLTEHERKRLCRVMDCQKLSFDACMHAAQNERLPLRVVVQVLFTEQVKISNALASSSAALRSSSSAPGADAAPAMPTTRRQLLDGTPQSFQEGWAAAKKDINTLKFELESMKAKYLELQHEMDALQKQVDGRGGGAPSPAAAKIGKQQQQGTSASAWSSGWKKLGRLAKMSGADAAAGGGVAPPGGGEAAARKGPRRWRNSIS</sequence>